<evidence type="ECO:0000255" key="1">
    <source>
        <dbReference type="HAMAP-Rule" id="MF_01600"/>
    </source>
</evidence>
<evidence type="ECO:0000256" key="2">
    <source>
        <dbReference type="SAM" id="MobiDB-lite"/>
    </source>
</evidence>
<organism>
    <name type="scientific">Frankia casuarinae (strain DSM 45818 / CECT 9043 / HFP020203 / CcI3)</name>
    <dbReference type="NCBI Taxonomy" id="106370"/>
    <lineage>
        <taxon>Bacteria</taxon>
        <taxon>Bacillati</taxon>
        <taxon>Actinomycetota</taxon>
        <taxon>Actinomycetes</taxon>
        <taxon>Frankiales</taxon>
        <taxon>Frankiaceae</taxon>
        <taxon>Frankia</taxon>
    </lineage>
</organism>
<accession>Q2J6G0</accession>
<comment type="subcellular location">
    <subcellularLocation>
        <location evidence="1">Cell membrane</location>
        <topology evidence="1">Multi-pass membrane protein</topology>
    </subcellularLocation>
</comment>
<comment type="similarity">
    <text evidence="1">Belongs to the UPF0182 family.</text>
</comment>
<feature type="chain" id="PRO_5000106853" description="UPF0182 protein Francci3_3781">
    <location>
        <begin position="1"/>
        <end position="1018"/>
    </location>
</feature>
<feature type="transmembrane region" description="Helical" evidence="1">
    <location>
        <begin position="13"/>
        <end position="33"/>
    </location>
</feature>
<feature type="transmembrane region" description="Helical" evidence="1">
    <location>
        <begin position="60"/>
        <end position="80"/>
    </location>
</feature>
<feature type="transmembrane region" description="Helical" evidence="1">
    <location>
        <begin position="109"/>
        <end position="129"/>
    </location>
</feature>
<feature type="transmembrane region" description="Helical" evidence="1">
    <location>
        <begin position="167"/>
        <end position="187"/>
    </location>
</feature>
<feature type="transmembrane region" description="Helical" evidence="1">
    <location>
        <begin position="208"/>
        <end position="228"/>
    </location>
</feature>
<feature type="transmembrane region" description="Helical" evidence="1">
    <location>
        <begin position="250"/>
        <end position="270"/>
    </location>
</feature>
<feature type="transmembrane region" description="Helical" evidence="1">
    <location>
        <begin position="283"/>
        <end position="303"/>
    </location>
</feature>
<feature type="region of interest" description="Disordered" evidence="2">
    <location>
        <begin position="886"/>
        <end position="920"/>
    </location>
</feature>
<feature type="region of interest" description="Disordered" evidence="2">
    <location>
        <begin position="960"/>
        <end position="1018"/>
    </location>
</feature>
<feature type="compositionally biased region" description="Low complexity" evidence="2">
    <location>
        <begin position="886"/>
        <end position="896"/>
    </location>
</feature>
<feature type="compositionally biased region" description="Low complexity" evidence="2">
    <location>
        <begin position="960"/>
        <end position="980"/>
    </location>
</feature>
<feature type="compositionally biased region" description="Pro residues" evidence="2">
    <location>
        <begin position="981"/>
        <end position="995"/>
    </location>
</feature>
<protein>
    <recommendedName>
        <fullName evidence="1">UPF0182 protein Francci3_3781</fullName>
    </recommendedName>
</protein>
<reference key="1">
    <citation type="journal article" date="2007" name="Genome Res.">
        <title>Genome characteristics of facultatively symbiotic Frankia sp. strains reflect host range and host plant biogeography.</title>
        <authorList>
            <person name="Normand P."/>
            <person name="Lapierre P."/>
            <person name="Tisa L.S."/>
            <person name="Gogarten J.P."/>
            <person name="Alloisio N."/>
            <person name="Bagnarol E."/>
            <person name="Bassi C.A."/>
            <person name="Berry A.M."/>
            <person name="Bickhart D.M."/>
            <person name="Choisne N."/>
            <person name="Couloux A."/>
            <person name="Cournoyer B."/>
            <person name="Cruveiller S."/>
            <person name="Daubin V."/>
            <person name="Demange N."/>
            <person name="Francino M.P."/>
            <person name="Goltsman E."/>
            <person name="Huang Y."/>
            <person name="Kopp O.R."/>
            <person name="Labarre L."/>
            <person name="Lapidus A."/>
            <person name="Lavire C."/>
            <person name="Marechal J."/>
            <person name="Martinez M."/>
            <person name="Mastronunzio J.E."/>
            <person name="Mullin B.C."/>
            <person name="Niemann J."/>
            <person name="Pujic P."/>
            <person name="Rawnsley T."/>
            <person name="Rouy Z."/>
            <person name="Schenowitz C."/>
            <person name="Sellstedt A."/>
            <person name="Tavares F."/>
            <person name="Tomkins J.P."/>
            <person name="Vallenet D."/>
            <person name="Valverde C."/>
            <person name="Wall L.G."/>
            <person name="Wang Y."/>
            <person name="Medigue C."/>
            <person name="Benson D.R."/>
        </authorList>
    </citation>
    <scope>NUCLEOTIDE SEQUENCE [LARGE SCALE GENOMIC DNA]</scope>
    <source>
        <strain>DSM 45818 / CECT 9043 / HFP020203 / CcI3</strain>
    </source>
</reference>
<dbReference type="EMBL" id="CP000249">
    <property type="protein sequence ID" value="ABD13132.1"/>
    <property type="molecule type" value="Genomic_DNA"/>
</dbReference>
<dbReference type="RefSeq" id="WP_011438156.1">
    <property type="nucleotide sequence ID" value="NZ_JENI01000048.1"/>
</dbReference>
<dbReference type="SMR" id="Q2J6G0"/>
<dbReference type="KEGG" id="fra:Francci3_3781"/>
<dbReference type="eggNOG" id="COG1615">
    <property type="taxonomic scope" value="Bacteria"/>
</dbReference>
<dbReference type="HOGENOM" id="CLU_007733_1_0_11"/>
<dbReference type="OrthoDB" id="9763654at2"/>
<dbReference type="PhylomeDB" id="Q2J6G0"/>
<dbReference type="Proteomes" id="UP000001937">
    <property type="component" value="Chromosome"/>
</dbReference>
<dbReference type="GO" id="GO:0005576">
    <property type="term" value="C:extracellular region"/>
    <property type="evidence" value="ECO:0007669"/>
    <property type="project" value="TreeGrafter"/>
</dbReference>
<dbReference type="GO" id="GO:0005886">
    <property type="term" value="C:plasma membrane"/>
    <property type="evidence" value="ECO:0007669"/>
    <property type="project" value="UniProtKB-SubCell"/>
</dbReference>
<dbReference type="HAMAP" id="MF_01600">
    <property type="entry name" value="UPF0182"/>
    <property type="match status" value="1"/>
</dbReference>
<dbReference type="InterPro" id="IPR005372">
    <property type="entry name" value="UPF0182"/>
</dbReference>
<dbReference type="NCBIfam" id="NF000825">
    <property type="entry name" value="PRK00068.1"/>
    <property type="match status" value="1"/>
</dbReference>
<dbReference type="PANTHER" id="PTHR39344">
    <property type="entry name" value="UPF0182 PROTEIN SLL1060"/>
    <property type="match status" value="1"/>
</dbReference>
<dbReference type="PANTHER" id="PTHR39344:SF1">
    <property type="entry name" value="UPF0182 PROTEIN SLL1060"/>
    <property type="match status" value="1"/>
</dbReference>
<dbReference type="Pfam" id="PF03699">
    <property type="entry name" value="UPF0182"/>
    <property type="match status" value="1"/>
</dbReference>
<gene>
    <name type="ordered locus">Francci3_3781</name>
</gene>
<name>Y3781_FRACC</name>
<sequence>MATTSRRPVLTRTKVLVPVLLVIVLAITIIAIFTRLYTDLLFYRSIDFSRVFTTVLYTRILLFVLFGVVMAIIVGTNIVLAYRLRPPLRPLSTEQQNLERYRSVIEPYMLLILLAVTTLFGLAAGLSAAGQWRTWLLWVNGESFGTPDLQFHRDISYYAFSYPFQRFLLGFLLTAVLLSLLVTLLTHYLFGGIRMQTTGERVTPAAKAHISVLLGLLALLKAWAYYLDRFGSVFSSRGVGTGASYTDVHAVLPAKLILLFISLACAVLFIYNIFQRGWTLPLLGAGILVLSSVVIGGIYPAIVQQFQVRPNEATREEPYIARNIAATRAAYGIQDVEPQDYAASTDVTAQQVAADTGTVPNIRLLDPSKLSRTFQQLQQFRGYYGFPPTLDVDRYTVTGADKKSTTQDYVVSVRELNQAGLGTQQRNWINEHLTYTHGKGFVAAPSNTVDVGRPDFDHGVSGFPQDGTFGIKENRVYFGEMSPSYSIVGTRQMEIDGPGPGETQVTTTYQGDGGVSIGSTFRRALFALRFGEKNILLSGDITKNSRILDERNPRDRVSKAAPWLTLDGDPYPAIVNGRVTWILDGYTTSDGYPYSARRTLGDVTADSVTTQSGNRTRQASNQVNYIRNSVKATVDAYNGTVTLYAWDESDPVLRTWMKAFPDTVKPKSDIPPSLRAHLRYPEDLFKVQRDLIGQYHISNPRDFYSQEDFWDVSDSPDGSGQPQPPFYVYSQLPGRKDPSYNLTSPLISARSSKLAAYMAVSSDPANYGRFTLLKLPAGNTINGPVQVQNAIEGNGDVAKQLSLWRSGGATTIEGNLLTLPLAGGLLYVEPYYVQARGSTGYPTLQGVATAFGDRIGFGASLGEALDKVFGAGAGAAAAGAGIGATTTDAGQDGTPAPRSGQGGAGVPPPGQTALQDAVGDADRAYQAGQDALRKSPPDFTAYGKAQSELADALGRLRTLSSPAATPPAATATRAGASVPASPVPASPAAKPPAPSPSATVAGGDTPGPPGARAAPAPG</sequence>
<proteinExistence type="inferred from homology"/>
<keyword id="KW-1003">Cell membrane</keyword>
<keyword id="KW-0472">Membrane</keyword>
<keyword id="KW-1185">Reference proteome</keyword>
<keyword id="KW-0812">Transmembrane</keyword>
<keyword id="KW-1133">Transmembrane helix</keyword>